<reference key="1">
    <citation type="submission" date="2007-06" db="EMBL/GenBank/DDBJ databases">
        <title>Complete sequence of Sinorhizobium medicae WSM419 chromosome.</title>
        <authorList>
            <consortium name="US DOE Joint Genome Institute"/>
            <person name="Copeland A."/>
            <person name="Lucas S."/>
            <person name="Lapidus A."/>
            <person name="Barry K."/>
            <person name="Glavina del Rio T."/>
            <person name="Dalin E."/>
            <person name="Tice H."/>
            <person name="Pitluck S."/>
            <person name="Chain P."/>
            <person name="Malfatti S."/>
            <person name="Shin M."/>
            <person name="Vergez L."/>
            <person name="Schmutz J."/>
            <person name="Larimer F."/>
            <person name="Land M."/>
            <person name="Hauser L."/>
            <person name="Kyrpides N."/>
            <person name="Mikhailova N."/>
            <person name="Reeve W.G."/>
            <person name="Richardson P."/>
        </authorList>
    </citation>
    <scope>NUCLEOTIDE SEQUENCE [LARGE SCALE GENOMIC DNA]</scope>
    <source>
        <strain>WSM419</strain>
    </source>
</reference>
<dbReference type="EC" id="4.2.3.5" evidence="1"/>
<dbReference type="EMBL" id="CP000738">
    <property type="protein sequence ID" value="ABR59371.1"/>
    <property type="molecule type" value="Genomic_DNA"/>
</dbReference>
<dbReference type="RefSeq" id="WP_011974717.1">
    <property type="nucleotide sequence ID" value="NC_009636.1"/>
</dbReference>
<dbReference type="RefSeq" id="YP_001326206.1">
    <property type="nucleotide sequence ID" value="NC_009636.1"/>
</dbReference>
<dbReference type="SMR" id="A6U6U1"/>
<dbReference type="STRING" id="366394.Smed_0515"/>
<dbReference type="GeneID" id="61609789"/>
<dbReference type="KEGG" id="smd:Smed_0515"/>
<dbReference type="PATRIC" id="fig|366394.8.peg.3602"/>
<dbReference type="eggNOG" id="COG0082">
    <property type="taxonomic scope" value="Bacteria"/>
</dbReference>
<dbReference type="HOGENOM" id="CLU_034547_0_0_5"/>
<dbReference type="OrthoDB" id="9771806at2"/>
<dbReference type="UniPathway" id="UPA00053">
    <property type="reaction ID" value="UER00090"/>
</dbReference>
<dbReference type="Proteomes" id="UP000001108">
    <property type="component" value="Chromosome"/>
</dbReference>
<dbReference type="GO" id="GO:0005829">
    <property type="term" value="C:cytosol"/>
    <property type="evidence" value="ECO:0007669"/>
    <property type="project" value="TreeGrafter"/>
</dbReference>
<dbReference type="GO" id="GO:0004107">
    <property type="term" value="F:chorismate synthase activity"/>
    <property type="evidence" value="ECO:0007669"/>
    <property type="project" value="UniProtKB-UniRule"/>
</dbReference>
<dbReference type="GO" id="GO:0010181">
    <property type="term" value="F:FMN binding"/>
    <property type="evidence" value="ECO:0007669"/>
    <property type="project" value="TreeGrafter"/>
</dbReference>
<dbReference type="GO" id="GO:0008652">
    <property type="term" value="P:amino acid biosynthetic process"/>
    <property type="evidence" value="ECO:0007669"/>
    <property type="project" value="UniProtKB-KW"/>
</dbReference>
<dbReference type="GO" id="GO:0009073">
    <property type="term" value="P:aromatic amino acid family biosynthetic process"/>
    <property type="evidence" value="ECO:0007669"/>
    <property type="project" value="UniProtKB-KW"/>
</dbReference>
<dbReference type="GO" id="GO:0009423">
    <property type="term" value="P:chorismate biosynthetic process"/>
    <property type="evidence" value="ECO:0007669"/>
    <property type="project" value="UniProtKB-UniRule"/>
</dbReference>
<dbReference type="CDD" id="cd07304">
    <property type="entry name" value="Chorismate_synthase"/>
    <property type="match status" value="1"/>
</dbReference>
<dbReference type="Gene3D" id="3.60.150.10">
    <property type="entry name" value="Chorismate synthase AroC"/>
    <property type="match status" value="1"/>
</dbReference>
<dbReference type="HAMAP" id="MF_00300">
    <property type="entry name" value="Chorismate_synth"/>
    <property type="match status" value="1"/>
</dbReference>
<dbReference type="InterPro" id="IPR000453">
    <property type="entry name" value="Chorismate_synth"/>
</dbReference>
<dbReference type="InterPro" id="IPR035904">
    <property type="entry name" value="Chorismate_synth_AroC_sf"/>
</dbReference>
<dbReference type="InterPro" id="IPR020541">
    <property type="entry name" value="Chorismate_synthase_CS"/>
</dbReference>
<dbReference type="NCBIfam" id="TIGR00033">
    <property type="entry name" value="aroC"/>
    <property type="match status" value="1"/>
</dbReference>
<dbReference type="NCBIfam" id="NF003793">
    <property type="entry name" value="PRK05382.1"/>
    <property type="match status" value="1"/>
</dbReference>
<dbReference type="PANTHER" id="PTHR21085">
    <property type="entry name" value="CHORISMATE SYNTHASE"/>
    <property type="match status" value="1"/>
</dbReference>
<dbReference type="PANTHER" id="PTHR21085:SF0">
    <property type="entry name" value="CHORISMATE SYNTHASE"/>
    <property type="match status" value="1"/>
</dbReference>
<dbReference type="Pfam" id="PF01264">
    <property type="entry name" value="Chorismate_synt"/>
    <property type="match status" value="1"/>
</dbReference>
<dbReference type="PIRSF" id="PIRSF001456">
    <property type="entry name" value="Chorismate_synth"/>
    <property type="match status" value="1"/>
</dbReference>
<dbReference type="SUPFAM" id="SSF103263">
    <property type="entry name" value="Chorismate synthase, AroC"/>
    <property type="match status" value="1"/>
</dbReference>
<dbReference type="PROSITE" id="PS00787">
    <property type="entry name" value="CHORISMATE_SYNTHASE_1"/>
    <property type="match status" value="1"/>
</dbReference>
<dbReference type="PROSITE" id="PS00788">
    <property type="entry name" value="CHORISMATE_SYNTHASE_2"/>
    <property type="match status" value="1"/>
</dbReference>
<dbReference type="PROSITE" id="PS00789">
    <property type="entry name" value="CHORISMATE_SYNTHASE_3"/>
    <property type="match status" value="1"/>
</dbReference>
<accession>A6U6U1</accession>
<protein>
    <recommendedName>
        <fullName evidence="1">Chorismate synthase</fullName>
        <shortName evidence="1">CS</shortName>
        <ecNumber evidence="1">4.2.3.5</ecNumber>
    </recommendedName>
    <alternativeName>
        <fullName evidence="1">5-enolpyruvylshikimate-3-phosphate phospholyase</fullName>
    </alternativeName>
</protein>
<name>AROC_SINMW</name>
<evidence type="ECO:0000255" key="1">
    <source>
        <dbReference type="HAMAP-Rule" id="MF_00300"/>
    </source>
</evidence>
<gene>
    <name evidence="1" type="primary">aroC</name>
    <name type="ordered locus">Smed_0515</name>
</gene>
<proteinExistence type="inferred from homology"/>
<keyword id="KW-0028">Amino-acid biosynthesis</keyword>
<keyword id="KW-0057">Aromatic amino acid biosynthesis</keyword>
<keyword id="KW-0274">FAD</keyword>
<keyword id="KW-0285">Flavoprotein</keyword>
<keyword id="KW-0288">FMN</keyword>
<keyword id="KW-0456">Lyase</keyword>
<keyword id="KW-0521">NADP</keyword>
<feature type="chain" id="PRO_1000022557" description="Chorismate synthase">
    <location>
        <begin position="1"/>
        <end position="365"/>
    </location>
</feature>
<feature type="binding site" evidence="1">
    <location>
        <position position="48"/>
    </location>
    <ligand>
        <name>NADP(+)</name>
        <dbReference type="ChEBI" id="CHEBI:58349"/>
    </ligand>
</feature>
<feature type="binding site" evidence="1">
    <location>
        <position position="54"/>
    </location>
    <ligand>
        <name>NADP(+)</name>
        <dbReference type="ChEBI" id="CHEBI:58349"/>
    </ligand>
</feature>
<feature type="binding site" evidence="1">
    <location>
        <begin position="131"/>
        <end position="133"/>
    </location>
    <ligand>
        <name>FMN</name>
        <dbReference type="ChEBI" id="CHEBI:58210"/>
    </ligand>
</feature>
<feature type="binding site" evidence="1">
    <location>
        <begin position="243"/>
        <end position="244"/>
    </location>
    <ligand>
        <name>FMN</name>
        <dbReference type="ChEBI" id="CHEBI:58210"/>
    </ligand>
</feature>
<feature type="binding site" evidence="1">
    <location>
        <position position="288"/>
    </location>
    <ligand>
        <name>FMN</name>
        <dbReference type="ChEBI" id="CHEBI:58210"/>
    </ligand>
</feature>
<feature type="binding site" evidence="1">
    <location>
        <begin position="303"/>
        <end position="307"/>
    </location>
    <ligand>
        <name>FMN</name>
        <dbReference type="ChEBI" id="CHEBI:58210"/>
    </ligand>
</feature>
<feature type="binding site" evidence="1">
    <location>
        <position position="329"/>
    </location>
    <ligand>
        <name>FMN</name>
        <dbReference type="ChEBI" id="CHEBI:58210"/>
    </ligand>
</feature>
<organism>
    <name type="scientific">Sinorhizobium medicae (strain WSM419)</name>
    <name type="common">Ensifer medicae</name>
    <dbReference type="NCBI Taxonomy" id="366394"/>
    <lineage>
        <taxon>Bacteria</taxon>
        <taxon>Pseudomonadati</taxon>
        <taxon>Pseudomonadota</taxon>
        <taxon>Alphaproteobacteria</taxon>
        <taxon>Hyphomicrobiales</taxon>
        <taxon>Rhizobiaceae</taxon>
        <taxon>Sinorhizobium/Ensifer group</taxon>
        <taxon>Sinorhizobium</taxon>
    </lineage>
</organism>
<comment type="function">
    <text evidence="1">Catalyzes the anti-1,4-elimination of the C-3 phosphate and the C-6 proR hydrogen from 5-enolpyruvylshikimate-3-phosphate (EPSP) to yield chorismate, which is the branch point compound that serves as the starting substrate for the three terminal pathways of aromatic amino acid biosynthesis. This reaction introduces a second double bond into the aromatic ring system.</text>
</comment>
<comment type="catalytic activity">
    <reaction evidence="1">
        <text>5-O-(1-carboxyvinyl)-3-phosphoshikimate = chorismate + phosphate</text>
        <dbReference type="Rhea" id="RHEA:21020"/>
        <dbReference type="ChEBI" id="CHEBI:29748"/>
        <dbReference type="ChEBI" id="CHEBI:43474"/>
        <dbReference type="ChEBI" id="CHEBI:57701"/>
        <dbReference type="EC" id="4.2.3.5"/>
    </reaction>
</comment>
<comment type="cofactor">
    <cofactor evidence="1">
        <name>FMNH2</name>
        <dbReference type="ChEBI" id="CHEBI:57618"/>
    </cofactor>
    <text evidence="1">Reduced FMN (FMNH(2)).</text>
</comment>
<comment type="pathway">
    <text evidence="1">Metabolic intermediate biosynthesis; chorismate biosynthesis; chorismate from D-erythrose 4-phosphate and phosphoenolpyruvate: step 7/7.</text>
</comment>
<comment type="subunit">
    <text evidence="1">Homotetramer.</text>
</comment>
<comment type="similarity">
    <text evidence="1">Belongs to the chorismate synthase family.</text>
</comment>
<sequence>MSHNTFGHLFRVTTWGESHGPALGCVVDGCPPGLRFTLADIQTWLDKRKPGQSRFVTQRREDDLVKVLSGVMLDDDGETMISTGTPISMLIENTDQRSKDYSEIAKRYRPGHADYTYDVKYGIRDYRGGGRSSARETAARVAAGAIARQVVPGLVVRGALVQIGKHRIDRANWDWAEVGKNPFFSPDPAVVPVWEEYLDGIRKAGSSIGAIVEVIAEGVPAGIGAPIYGKLDQDIAANLMSINAVKGVEIGNGFAAAEISGEDNADEMRVGAGGDAVFLSNNAGGILGGISTGQPVVARFAIKPTSSILSERRSIDSDGKEVDVRTKGRHDPCVGIRAVPIGEAMLACAIADHYLRDRGQTGRLK</sequence>